<keyword id="KW-0028">Amino-acid biosynthesis</keyword>
<keyword id="KW-0055">Arginine biosynthesis</keyword>
<keyword id="KW-0067">ATP-binding</keyword>
<keyword id="KW-0963">Cytoplasm</keyword>
<keyword id="KW-0418">Kinase</keyword>
<keyword id="KW-0547">Nucleotide-binding</keyword>
<keyword id="KW-0808">Transferase</keyword>
<gene>
    <name evidence="1" type="primary">argB</name>
    <name type="ordered locus">Dvul_1613</name>
</gene>
<organism>
    <name type="scientific">Nitratidesulfovibrio vulgaris (strain DP4)</name>
    <name type="common">Desulfovibrio vulgaris</name>
    <dbReference type="NCBI Taxonomy" id="391774"/>
    <lineage>
        <taxon>Bacteria</taxon>
        <taxon>Pseudomonadati</taxon>
        <taxon>Thermodesulfobacteriota</taxon>
        <taxon>Desulfovibrionia</taxon>
        <taxon>Desulfovibrionales</taxon>
        <taxon>Desulfovibrionaceae</taxon>
        <taxon>Nitratidesulfovibrio</taxon>
    </lineage>
</organism>
<name>ARGB_NITV4</name>
<feature type="chain" id="PRO_1000010498" description="Acetylglutamate kinase">
    <location>
        <begin position="1"/>
        <end position="308"/>
    </location>
</feature>
<feature type="binding site" evidence="1">
    <location>
        <begin position="67"/>
        <end position="68"/>
    </location>
    <ligand>
        <name>substrate</name>
    </ligand>
</feature>
<feature type="binding site" evidence="1">
    <location>
        <position position="89"/>
    </location>
    <ligand>
        <name>substrate</name>
    </ligand>
</feature>
<feature type="binding site" evidence="1">
    <location>
        <position position="193"/>
    </location>
    <ligand>
        <name>substrate</name>
    </ligand>
</feature>
<feature type="site" description="Transition state stabilizer" evidence="1">
    <location>
        <position position="32"/>
    </location>
</feature>
<feature type="site" description="Transition state stabilizer" evidence="1">
    <location>
        <position position="253"/>
    </location>
</feature>
<dbReference type="EC" id="2.7.2.8" evidence="1"/>
<dbReference type="EMBL" id="CP000527">
    <property type="protein sequence ID" value="ABM28630.1"/>
    <property type="molecule type" value="Genomic_DNA"/>
</dbReference>
<dbReference type="RefSeq" id="WP_010938759.1">
    <property type="nucleotide sequence ID" value="NC_008751.1"/>
</dbReference>
<dbReference type="SMR" id="A1VDW4"/>
<dbReference type="KEGG" id="dvl:Dvul_1613"/>
<dbReference type="HOGENOM" id="CLU_053680_0_0_7"/>
<dbReference type="UniPathway" id="UPA00068">
    <property type="reaction ID" value="UER00107"/>
</dbReference>
<dbReference type="Proteomes" id="UP000009173">
    <property type="component" value="Chromosome"/>
</dbReference>
<dbReference type="GO" id="GO:0005737">
    <property type="term" value="C:cytoplasm"/>
    <property type="evidence" value="ECO:0007669"/>
    <property type="project" value="UniProtKB-SubCell"/>
</dbReference>
<dbReference type="GO" id="GO:0003991">
    <property type="term" value="F:acetylglutamate kinase activity"/>
    <property type="evidence" value="ECO:0007669"/>
    <property type="project" value="UniProtKB-UniRule"/>
</dbReference>
<dbReference type="GO" id="GO:0005524">
    <property type="term" value="F:ATP binding"/>
    <property type="evidence" value="ECO:0007669"/>
    <property type="project" value="UniProtKB-UniRule"/>
</dbReference>
<dbReference type="GO" id="GO:0042450">
    <property type="term" value="P:arginine biosynthetic process via ornithine"/>
    <property type="evidence" value="ECO:0007669"/>
    <property type="project" value="UniProtKB-UniRule"/>
</dbReference>
<dbReference type="GO" id="GO:0006526">
    <property type="term" value="P:L-arginine biosynthetic process"/>
    <property type="evidence" value="ECO:0007669"/>
    <property type="project" value="UniProtKB-UniPathway"/>
</dbReference>
<dbReference type="CDD" id="cd04250">
    <property type="entry name" value="AAK_NAGK-C"/>
    <property type="match status" value="1"/>
</dbReference>
<dbReference type="FunFam" id="3.40.1160.10:FF:000004">
    <property type="entry name" value="Acetylglutamate kinase"/>
    <property type="match status" value="1"/>
</dbReference>
<dbReference type="Gene3D" id="3.40.1160.10">
    <property type="entry name" value="Acetylglutamate kinase-like"/>
    <property type="match status" value="1"/>
</dbReference>
<dbReference type="HAMAP" id="MF_00082">
    <property type="entry name" value="ArgB"/>
    <property type="match status" value="1"/>
</dbReference>
<dbReference type="InterPro" id="IPR036393">
    <property type="entry name" value="AceGlu_kinase-like_sf"/>
</dbReference>
<dbReference type="InterPro" id="IPR004662">
    <property type="entry name" value="AcgluKinase_fam"/>
</dbReference>
<dbReference type="InterPro" id="IPR037528">
    <property type="entry name" value="ArgB"/>
</dbReference>
<dbReference type="InterPro" id="IPR001048">
    <property type="entry name" value="Asp/Glu/Uridylate_kinase"/>
</dbReference>
<dbReference type="InterPro" id="IPR041727">
    <property type="entry name" value="NAGK-C"/>
</dbReference>
<dbReference type="NCBIfam" id="TIGR00761">
    <property type="entry name" value="argB"/>
    <property type="match status" value="1"/>
</dbReference>
<dbReference type="PANTHER" id="PTHR23342">
    <property type="entry name" value="N-ACETYLGLUTAMATE SYNTHASE"/>
    <property type="match status" value="1"/>
</dbReference>
<dbReference type="PANTHER" id="PTHR23342:SF0">
    <property type="entry name" value="N-ACETYLGLUTAMATE SYNTHASE, MITOCHONDRIAL"/>
    <property type="match status" value="1"/>
</dbReference>
<dbReference type="Pfam" id="PF00696">
    <property type="entry name" value="AA_kinase"/>
    <property type="match status" value="1"/>
</dbReference>
<dbReference type="PIRSF" id="PIRSF000728">
    <property type="entry name" value="NAGK"/>
    <property type="match status" value="1"/>
</dbReference>
<dbReference type="SUPFAM" id="SSF53633">
    <property type="entry name" value="Carbamate kinase-like"/>
    <property type="match status" value="1"/>
</dbReference>
<proteinExistence type="inferred from homology"/>
<reference key="1">
    <citation type="journal article" date="2009" name="Environ. Microbiol.">
        <title>Contribution of mobile genetic elements to Desulfovibrio vulgaris genome plasticity.</title>
        <authorList>
            <person name="Walker C.B."/>
            <person name="Stolyar S."/>
            <person name="Chivian D."/>
            <person name="Pinel N."/>
            <person name="Gabster J.A."/>
            <person name="Dehal P.S."/>
            <person name="He Z."/>
            <person name="Yang Z.K."/>
            <person name="Yen H.C."/>
            <person name="Zhou J."/>
            <person name="Wall J.D."/>
            <person name="Hazen T.C."/>
            <person name="Arkin A.P."/>
            <person name="Stahl D.A."/>
        </authorList>
    </citation>
    <scope>NUCLEOTIDE SEQUENCE [LARGE SCALE GENOMIC DNA]</scope>
    <source>
        <strain>DP4</strain>
    </source>
</reference>
<sequence length="308" mass="33080">MDCVENARLQSKVLIESLPYLRQFHGETVVIKYGGHAMKDEALKKAFALNVALLKLVGINPVIVHGGGPQIGKMLEQLNIQSHFREGLRVTDDATMDVVEMVLVGKVNKEIVNQMNLAGAKAVGLSGKDGMLIRARKMEMVISKEAQAPEIIDLGKVGEVMGVNTTLLRSLERDGFVPVIAPVGVDDNGETYNINADAVAGAVAAALKAKRLLLLTDVAGILDHDKKLIRSVNMREAVNLFSDGTLTGGMIPKVKCCLEALEEGVEKAMIIDGRTENCILLELLTDKGVGTEIVSDRAAQAACNCVLR</sequence>
<comment type="function">
    <text evidence="1">Catalyzes the ATP-dependent phosphorylation of N-acetyl-L-glutamate.</text>
</comment>
<comment type="catalytic activity">
    <reaction evidence="1">
        <text>N-acetyl-L-glutamate + ATP = N-acetyl-L-glutamyl 5-phosphate + ADP</text>
        <dbReference type="Rhea" id="RHEA:14629"/>
        <dbReference type="ChEBI" id="CHEBI:30616"/>
        <dbReference type="ChEBI" id="CHEBI:44337"/>
        <dbReference type="ChEBI" id="CHEBI:57936"/>
        <dbReference type="ChEBI" id="CHEBI:456216"/>
        <dbReference type="EC" id="2.7.2.8"/>
    </reaction>
</comment>
<comment type="pathway">
    <text evidence="1">Amino-acid biosynthesis; L-arginine biosynthesis; N(2)-acetyl-L-ornithine from L-glutamate: step 2/4.</text>
</comment>
<comment type="subcellular location">
    <subcellularLocation>
        <location evidence="1">Cytoplasm</location>
    </subcellularLocation>
</comment>
<comment type="similarity">
    <text evidence="1">Belongs to the acetylglutamate kinase family. ArgB subfamily.</text>
</comment>
<accession>A1VDW4</accession>
<protein>
    <recommendedName>
        <fullName evidence="1">Acetylglutamate kinase</fullName>
        <ecNumber evidence="1">2.7.2.8</ecNumber>
    </recommendedName>
    <alternativeName>
        <fullName evidence="1">N-acetyl-L-glutamate 5-phosphotransferase</fullName>
    </alternativeName>
    <alternativeName>
        <fullName evidence="1">NAG kinase</fullName>
        <shortName evidence="1">NAGK</shortName>
    </alternativeName>
</protein>
<evidence type="ECO:0000255" key="1">
    <source>
        <dbReference type="HAMAP-Rule" id="MF_00082"/>
    </source>
</evidence>